<protein>
    <recommendedName>
        <fullName evidence="1">Cell division protein FtsB</fullName>
    </recommendedName>
</protein>
<reference key="1">
    <citation type="submission" date="2006-08" db="EMBL/GenBank/DDBJ databases">
        <title>Complete sequence of Shewanella frigidimarina NCIMB 400.</title>
        <authorList>
            <consortium name="US DOE Joint Genome Institute"/>
            <person name="Copeland A."/>
            <person name="Lucas S."/>
            <person name="Lapidus A."/>
            <person name="Barry K."/>
            <person name="Detter J.C."/>
            <person name="Glavina del Rio T."/>
            <person name="Hammon N."/>
            <person name="Israni S."/>
            <person name="Dalin E."/>
            <person name="Tice H."/>
            <person name="Pitluck S."/>
            <person name="Fredrickson J.K."/>
            <person name="Kolker E."/>
            <person name="McCuel L.A."/>
            <person name="DiChristina T."/>
            <person name="Nealson K.H."/>
            <person name="Newman D."/>
            <person name="Tiedje J.M."/>
            <person name="Zhou J."/>
            <person name="Romine M.F."/>
            <person name="Culley D.E."/>
            <person name="Serres M."/>
            <person name="Chertkov O."/>
            <person name="Brettin T."/>
            <person name="Bruce D."/>
            <person name="Han C."/>
            <person name="Tapia R."/>
            <person name="Gilna P."/>
            <person name="Schmutz J."/>
            <person name="Larimer F."/>
            <person name="Land M."/>
            <person name="Hauser L."/>
            <person name="Kyrpides N."/>
            <person name="Mikhailova N."/>
            <person name="Richardson P."/>
        </authorList>
    </citation>
    <scope>NUCLEOTIDE SEQUENCE [LARGE SCALE GENOMIC DNA]</scope>
    <source>
        <strain>NCIMB 400</strain>
    </source>
</reference>
<proteinExistence type="inferred from homology"/>
<accession>Q086A9</accession>
<feature type="chain" id="PRO_1000025722" description="Cell division protein FtsB">
    <location>
        <begin position="1"/>
        <end position="100"/>
    </location>
</feature>
<feature type="topological domain" description="Cytoplasmic" evidence="1">
    <location>
        <begin position="1"/>
        <end position="3"/>
    </location>
</feature>
<feature type="transmembrane region" description="Helical" evidence="1">
    <location>
        <begin position="4"/>
        <end position="21"/>
    </location>
</feature>
<feature type="topological domain" description="Periplasmic" evidence="1">
    <location>
        <begin position="22"/>
        <end position="100"/>
    </location>
</feature>
<feature type="coiled-coil region" evidence="1">
    <location>
        <begin position="49"/>
        <end position="73"/>
    </location>
</feature>
<gene>
    <name evidence="1" type="primary">ftsB</name>
    <name type="ordered locus">Sfri_1053</name>
</gene>
<sequence>MKQLIFLLICLLSLLQYRLWLGDNNLSEYVLLQTQIAGQEQSNGKLVARNQILKEEIIDLKRGTEAIEERARNELGMVKEGETFYRVVGSELRERNPFNR</sequence>
<comment type="function">
    <text evidence="1">Essential cell division protein. May link together the upstream cell division proteins, which are predominantly cytoplasmic, with the downstream cell division proteins, which are predominantly periplasmic.</text>
</comment>
<comment type="subunit">
    <text evidence="1">Part of a complex composed of FtsB, FtsL and FtsQ.</text>
</comment>
<comment type="subcellular location">
    <subcellularLocation>
        <location evidence="1">Cell inner membrane</location>
        <topology evidence="1">Single-pass type II membrane protein</topology>
    </subcellularLocation>
    <text evidence="1">Localizes to the division septum.</text>
</comment>
<comment type="similarity">
    <text evidence="1">Belongs to the FtsB family.</text>
</comment>
<dbReference type="EMBL" id="CP000447">
    <property type="protein sequence ID" value="ABI70906.1"/>
    <property type="molecule type" value="Genomic_DNA"/>
</dbReference>
<dbReference type="RefSeq" id="WP_011636527.1">
    <property type="nucleotide sequence ID" value="NC_008345.1"/>
</dbReference>
<dbReference type="SMR" id="Q086A9"/>
<dbReference type="STRING" id="318167.Sfri_1053"/>
<dbReference type="KEGG" id="sfr:Sfri_1053"/>
<dbReference type="eggNOG" id="COG2919">
    <property type="taxonomic scope" value="Bacteria"/>
</dbReference>
<dbReference type="HOGENOM" id="CLU_134863_5_2_6"/>
<dbReference type="OrthoDB" id="7061211at2"/>
<dbReference type="Proteomes" id="UP000000684">
    <property type="component" value="Chromosome"/>
</dbReference>
<dbReference type="GO" id="GO:0032153">
    <property type="term" value="C:cell division site"/>
    <property type="evidence" value="ECO:0007669"/>
    <property type="project" value="UniProtKB-UniRule"/>
</dbReference>
<dbReference type="GO" id="GO:0030428">
    <property type="term" value="C:cell septum"/>
    <property type="evidence" value="ECO:0007669"/>
    <property type="project" value="TreeGrafter"/>
</dbReference>
<dbReference type="GO" id="GO:0005886">
    <property type="term" value="C:plasma membrane"/>
    <property type="evidence" value="ECO:0007669"/>
    <property type="project" value="UniProtKB-SubCell"/>
</dbReference>
<dbReference type="GO" id="GO:0043093">
    <property type="term" value="P:FtsZ-dependent cytokinesis"/>
    <property type="evidence" value="ECO:0007669"/>
    <property type="project" value="UniProtKB-UniRule"/>
</dbReference>
<dbReference type="HAMAP" id="MF_00599">
    <property type="entry name" value="FtsB"/>
    <property type="match status" value="1"/>
</dbReference>
<dbReference type="InterPro" id="IPR023081">
    <property type="entry name" value="Cell_div_FtsB"/>
</dbReference>
<dbReference type="InterPro" id="IPR007060">
    <property type="entry name" value="FtsL/DivIC"/>
</dbReference>
<dbReference type="NCBIfam" id="NF002058">
    <property type="entry name" value="PRK00888.1"/>
    <property type="match status" value="1"/>
</dbReference>
<dbReference type="PANTHER" id="PTHR37485">
    <property type="entry name" value="CELL DIVISION PROTEIN FTSB"/>
    <property type="match status" value="1"/>
</dbReference>
<dbReference type="PANTHER" id="PTHR37485:SF1">
    <property type="entry name" value="CELL DIVISION PROTEIN FTSB"/>
    <property type="match status" value="1"/>
</dbReference>
<dbReference type="Pfam" id="PF04977">
    <property type="entry name" value="DivIC"/>
    <property type="match status" value="1"/>
</dbReference>
<keyword id="KW-0131">Cell cycle</keyword>
<keyword id="KW-0132">Cell division</keyword>
<keyword id="KW-0997">Cell inner membrane</keyword>
<keyword id="KW-1003">Cell membrane</keyword>
<keyword id="KW-0175">Coiled coil</keyword>
<keyword id="KW-0472">Membrane</keyword>
<keyword id="KW-1185">Reference proteome</keyword>
<keyword id="KW-0812">Transmembrane</keyword>
<keyword id="KW-1133">Transmembrane helix</keyword>
<organism>
    <name type="scientific">Shewanella frigidimarina (strain NCIMB 400)</name>
    <dbReference type="NCBI Taxonomy" id="318167"/>
    <lineage>
        <taxon>Bacteria</taxon>
        <taxon>Pseudomonadati</taxon>
        <taxon>Pseudomonadota</taxon>
        <taxon>Gammaproteobacteria</taxon>
        <taxon>Alteromonadales</taxon>
        <taxon>Shewanellaceae</taxon>
        <taxon>Shewanella</taxon>
    </lineage>
</organism>
<evidence type="ECO:0000255" key="1">
    <source>
        <dbReference type="HAMAP-Rule" id="MF_00599"/>
    </source>
</evidence>
<name>FTSB_SHEFN</name>